<keyword id="KW-0963">Cytoplasm</keyword>
<keyword id="KW-0378">Hydrolase</keyword>
<keyword id="KW-0694">RNA-binding</keyword>
<keyword id="KW-0820">tRNA-binding</keyword>
<proteinExistence type="inferred from homology"/>
<protein>
    <recommendedName>
        <fullName evidence="1">Peptidyl-tRNA hydrolase</fullName>
        <shortName evidence="1">Pth</shortName>
        <ecNumber evidence="1">3.1.1.29</ecNumber>
    </recommendedName>
</protein>
<accession>B4ULC2</accession>
<reference key="1">
    <citation type="submission" date="2008-08" db="EMBL/GenBank/DDBJ databases">
        <title>Complete sequence of Anaeromyxobacter sp. K.</title>
        <authorList>
            <consortium name="US DOE Joint Genome Institute"/>
            <person name="Lucas S."/>
            <person name="Copeland A."/>
            <person name="Lapidus A."/>
            <person name="Glavina del Rio T."/>
            <person name="Dalin E."/>
            <person name="Tice H."/>
            <person name="Bruce D."/>
            <person name="Goodwin L."/>
            <person name="Pitluck S."/>
            <person name="Saunders E."/>
            <person name="Brettin T."/>
            <person name="Detter J.C."/>
            <person name="Han C."/>
            <person name="Larimer F."/>
            <person name="Land M."/>
            <person name="Hauser L."/>
            <person name="Kyrpides N."/>
            <person name="Ovchinnikiva G."/>
            <person name="Beliaev A."/>
        </authorList>
    </citation>
    <scope>NUCLEOTIDE SEQUENCE [LARGE SCALE GENOMIC DNA]</scope>
    <source>
        <strain>K</strain>
    </source>
</reference>
<name>PTH_ANASK</name>
<gene>
    <name evidence="1" type="primary">pth</name>
    <name type="ordered locus">AnaeK_0126</name>
</gene>
<organism>
    <name type="scientific">Anaeromyxobacter sp. (strain K)</name>
    <dbReference type="NCBI Taxonomy" id="447217"/>
    <lineage>
        <taxon>Bacteria</taxon>
        <taxon>Pseudomonadati</taxon>
        <taxon>Myxococcota</taxon>
        <taxon>Myxococcia</taxon>
        <taxon>Myxococcales</taxon>
        <taxon>Cystobacterineae</taxon>
        <taxon>Anaeromyxobacteraceae</taxon>
        <taxon>Anaeromyxobacter</taxon>
    </lineage>
</organism>
<comment type="function">
    <text evidence="1">Hydrolyzes ribosome-free peptidyl-tRNAs (with 1 or more amino acids incorporated), which drop off the ribosome during protein synthesis, or as a result of ribosome stalling.</text>
</comment>
<comment type="function">
    <text evidence="1">Catalyzes the release of premature peptidyl moieties from peptidyl-tRNA molecules trapped in stalled 50S ribosomal subunits, and thus maintains levels of free tRNAs and 50S ribosomes.</text>
</comment>
<comment type="catalytic activity">
    <reaction evidence="1">
        <text>an N-acyl-L-alpha-aminoacyl-tRNA + H2O = an N-acyl-L-amino acid + a tRNA + H(+)</text>
        <dbReference type="Rhea" id="RHEA:54448"/>
        <dbReference type="Rhea" id="RHEA-COMP:10123"/>
        <dbReference type="Rhea" id="RHEA-COMP:13883"/>
        <dbReference type="ChEBI" id="CHEBI:15377"/>
        <dbReference type="ChEBI" id="CHEBI:15378"/>
        <dbReference type="ChEBI" id="CHEBI:59874"/>
        <dbReference type="ChEBI" id="CHEBI:78442"/>
        <dbReference type="ChEBI" id="CHEBI:138191"/>
        <dbReference type="EC" id="3.1.1.29"/>
    </reaction>
</comment>
<comment type="subunit">
    <text evidence="1">Monomer.</text>
</comment>
<comment type="subcellular location">
    <subcellularLocation>
        <location evidence="1">Cytoplasm</location>
    </subcellularLocation>
</comment>
<comment type="similarity">
    <text evidence="1">Belongs to the PTH family.</text>
</comment>
<sequence length="192" mass="20751">MKLVVGLGNPGEEYARTRHNVGFVVADRLAQLAGASFSAKKFAAELAEARLGPERVWIMKPQTYMNHSGEAVGAALRFWKLGLDDLVVVHDDLELDPYRVQLKVGGGHGGHNGVKSVNAHVGSPEYARVRVGVGRPPPRMDPADYVLGKFAKGEDAELDLCVEQAVEATRLAVELGAARAMNQVNRRSRAAE</sequence>
<dbReference type="EC" id="3.1.1.29" evidence="1"/>
<dbReference type="EMBL" id="CP001131">
    <property type="protein sequence ID" value="ACG71369.1"/>
    <property type="molecule type" value="Genomic_DNA"/>
</dbReference>
<dbReference type="RefSeq" id="WP_012524205.1">
    <property type="nucleotide sequence ID" value="NC_011145.1"/>
</dbReference>
<dbReference type="SMR" id="B4ULC2"/>
<dbReference type="KEGG" id="ank:AnaeK_0126"/>
<dbReference type="HOGENOM" id="CLU_062456_2_2_7"/>
<dbReference type="OrthoDB" id="9800507at2"/>
<dbReference type="Proteomes" id="UP000001871">
    <property type="component" value="Chromosome"/>
</dbReference>
<dbReference type="GO" id="GO:0005737">
    <property type="term" value="C:cytoplasm"/>
    <property type="evidence" value="ECO:0007669"/>
    <property type="project" value="UniProtKB-SubCell"/>
</dbReference>
<dbReference type="GO" id="GO:0004045">
    <property type="term" value="F:peptidyl-tRNA hydrolase activity"/>
    <property type="evidence" value="ECO:0007669"/>
    <property type="project" value="UniProtKB-UniRule"/>
</dbReference>
<dbReference type="GO" id="GO:0000049">
    <property type="term" value="F:tRNA binding"/>
    <property type="evidence" value="ECO:0007669"/>
    <property type="project" value="UniProtKB-UniRule"/>
</dbReference>
<dbReference type="GO" id="GO:0006515">
    <property type="term" value="P:protein quality control for misfolded or incompletely synthesized proteins"/>
    <property type="evidence" value="ECO:0007669"/>
    <property type="project" value="UniProtKB-UniRule"/>
</dbReference>
<dbReference type="GO" id="GO:0072344">
    <property type="term" value="P:rescue of stalled ribosome"/>
    <property type="evidence" value="ECO:0007669"/>
    <property type="project" value="UniProtKB-UniRule"/>
</dbReference>
<dbReference type="CDD" id="cd00462">
    <property type="entry name" value="PTH"/>
    <property type="match status" value="1"/>
</dbReference>
<dbReference type="FunFam" id="3.40.50.1470:FF:000001">
    <property type="entry name" value="Peptidyl-tRNA hydrolase"/>
    <property type="match status" value="1"/>
</dbReference>
<dbReference type="Gene3D" id="3.40.50.1470">
    <property type="entry name" value="Peptidyl-tRNA hydrolase"/>
    <property type="match status" value="1"/>
</dbReference>
<dbReference type="HAMAP" id="MF_00083">
    <property type="entry name" value="Pept_tRNA_hydro_bact"/>
    <property type="match status" value="1"/>
</dbReference>
<dbReference type="InterPro" id="IPR001328">
    <property type="entry name" value="Pept_tRNA_hydro"/>
</dbReference>
<dbReference type="InterPro" id="IPR018171">
    <property type="entry name" value="Pept_tRNA_hydro_CS"/>
</dbReference>
<dbReference type="InterPro" id="IPR036416">
    <property type="entry name" value="Pept_tRNA_hydro_sf"/>
</dbReference>
<dbReference type="NCBIfam" id="TIGR00447">
    <property type="entry name" value="pth"/>
    <property type="match status" value="1"/>
</dbReference>
<dbReference type="PANTHER" id="PTHR17224">
    <property type="entry name" value="PEPTIDYL-TRNA HYDROLASE"/>
    <property type="match status" value="1"/>
</dbReference>
<dbReference type="PANTHER" id="PTHR17224:SF1">
    <property type="entry name" value="PEPTIDYL-TRNA HYDROLASE"/>
    <property type="match status" value="1"/>
</dbReference>
<dbReference type="Pfam" id="PF01195">
    <property type="entry name" value="Pept_tRNA_hydro"/>
    <property type="match status" value="1"/>
</dbReference>
<dbReference type="SUPFAM" id="SSF53178">
    <property type="entry name" value="Peptidyl-tRNA hydrolase-like"/>
    <property type="match status" value="1"/>
</dbReference>
<dbReference type="PROSITE" id="PS01195">
    <property type="entry name" value="PEPT_TRNA_HYDROL_1"/>
    <property type="match status" value="1"/>
</dbReference>
<dbReference type="PROSITE" id="PS01196">
    <property type="entry name" value="PEPT_TRNA_HYDROL_2"/>
    <property type="match status" value="1"/>
</dbReference>
<feature type="chain" id="PRO_1000092907" description="Peptidyl-tRNA hydrolase">
    <location>
        <begin position="1"/>
        <end position="192"/>
    </location>
</feature>
<feature type="active site" description="Proton acceptor" evidence="1">
    <location>
        <position position="19"/>
    </location>
</feature>
<feature type="binding site" evidence="1">
    <location>
        <position position="14"/>
    </location>
    <ligand>
        <name>tRNA</name>
        <dbReference type="ChEBI" id="CHEBI:17843"/>
    </ligand>
</feature>
<feature type="binding site" evidence="1">
    <location>
        <position position="64"/>
    </location>
    <ligand>
        <name>tRNA</name>
        <dbReference type="ChEBI" id="CHEBI:17843"/>
    </ligand>
</feature>
<feature type="binding site" evidence="1">
    <location>
        <position position="66"/>
    </location>
    <ligand>
        <name>tRNA</name>
        <dbReference type="ChEBI" id="CHEBI:17843"/>
    </ligand>
</feature>
<feature type="binding site" evidence="1">
    <location>
        <position position="112"/>
    </location>
    <ligand>
        <name>tRNA</name>
        <dbReference type="ChEBI" id="CHEBI:17843"/>
    </ligand>
</feature>
<feature type="site" description="Discriminates between blocked and unblocked aminoacyl-tRNA" evidence="1">
    <location>
        <position position="9"/>
    </location>
</feature>
<feature type="site" description="Stabilizes the basic form of H active site to accept a proton" evidence="1">
    <location>
        <position position="91"/>
    </location>
</feature>
<evidence type="ECO:0000255" key="1">
    <source>
        <dbReference type="HAMAP-Rule" id="MF_00083"/>
    </source>
</evidence>